<keyword id="KW-0002">3D-structure</keyword>
<keyword id="KW-0963">Cytoplasm</keyword>
<keyword id="KW-0903">Direct protein sequencing</keyword>
<keyword id="KW-0378">Hydrolase</keyword>
<keyword id="KW-0460">Magnesium</keyword>
<keyword id="KW-0464">Manganese</keyword>
<keyword id="KW-0479">Metal-binding</keyword>
<keyword id="KW-0546">Nucleotide metabolism</keyword>
<keyword id="KW-0547">Nucleotide-binding</keyword>
<keyword id="KW-0539">Nucleus</keyword>
<keyword id="KW-1185">Reference proteome</keyword>
<keyword id="KW-0694">RNA-binding</keyword>
<proteinExistence type="evidence at protein level"/>
<organism>
    <name type="scientific">Xenopus laevis</name>
    <name type="common">African clawed frog</name>
    <dbReference type="NCBI Taxonomy" id="8355"/>
    <lineage>
        <taxon>Eukaryota</taxon>
        <taxon>Metazoa</taxon>
        <taxon>Chordata</taxon>
        <taxon>Craniata</taxon>
        <taxon>Vertebrata</taxon>
        <taxon>Euteleostomi</taxon>
        <taxon>Amphibia</taxon>
        <taxon>Batrachia</taxon>
        <taxon>Anura</taxon>
        <taxon>Pipoidea</taxon>
        <taxon>Pipidae</taxon>
        <taxon>Xenopodinae</taxon>
        <taxon>Xenopus</taxon>
        <taxon>Xenopus</taxon>
    </lineage>
</organism>
<protein>
    <recommendedName>
        <fullName>U8 snoRNA-decapping enzyme</fullName>
        <ecNumber evidence="6 8 9">3.6.1.62</ecNumber>
    </recommendedName>
    <alternativeName>
        <fullName>IDP phosphatase</fullName>
        <shortName>IDPase</shortName>
        <ecNumber evidence="2">3.6.1.64</ecNumber>
    </alternativeName>
    <alternativeName>
        <fullName>Inosine diphosphate phosphatase</fullName>
    </alternativeName>
    <alternativeName>
        <fullName>Nucleoside diphosphate-linked moiety X motif 16</fullName>
        <shortName>Nudix motif 16</shortName>
    </alternativeName>
    <alternativeName>
        <fullName>U8 snoRNA-binding protein X29</fullName>
    </alternativeName>
    <alternativeName>
        <fullName>m7GpppN-mRNA hydrolase</fullName>
    </alternativeName>
</protein>
<evidence type="ECO:0000250" key="1">
    <source>
        <dbReference type="UniProtKB" id="Q6P3D0"/>
    </source>
</evidence>
<evidence type="ECO:0000250" key="2">
    <source>
        <dbReference type="UniProtKB" id="Q96DE0"/>
    </source>
</evidence>
<evidence type="ECO:0000255" key="3">
    <source>
        <dbReference type="PROSITE-ProRule" id="PRU00794"/>
    </source>
</evidence>
<evidence type="ECO:0000256" key="4">
    <source>
        <dbReference type="SAM" id="MobiDB-lite"/>
    </source>
</evidence>
<evidence type="ECO:0000269" key="5">
    <source>
    </source>
</evidence>
<evidence type="ECO:0000269" key="6">
    <source>
    </source>
</evidence>
<evidence type="ECO:0000269" key="7">
    <source>
    </source>
</evidence>
<evidence type="ECO:0000269" key="8">
    <source>
    </source>
</evidence>
<evidence type="ECO:0000269" key="9">
    <source>
    </source>
</evidence>
<evidence type="ECO:0000305" key="10"/>
<evidence type="ECO:0007829" key="11">
    <source>
        <dbReference type="PDB" id="1U20"/>
    </source>
</evidence>
<evidence type="ECO:0007829" key="12">
    <source>
        <dbReference type="PDB" id="2A8T"/>
    </source>
</evidence>
<comment type="function">
    <text evidence="1 2 5 6 8 9">RNA-binding and decapping enzyme that catalyzes the cleavage of the cap structure of snoRNAs and mRNAs in a metal-dependent manner. Part of the U8 snoRNP complex that is required for the accumulation of mature 5.8S and 28S rRNA. Has diphosphatase activity and removes m7G and/or m227G caps from U8 snoRNA and leaves a 5'monophosphate on the RNA. Also catalyzes the cleavage of the cap structure on mRNAs. Does not hydrolyze cap analog structures like 7-methylguanosine nucleoside triphosphate (m7GpppG). Also hydrolysis m7G- and m227G U3-capped RNAs but with less efficiencies. Has broad substrate specificity with manganese or cobalt as cofactor and can act on various RNA species. Binds to the U8 snoRNA; metal is not required for RNA-binding. May play a role in the regulation of snoRNAs and mRNAs degradation (PubMed:10585477, PubMed:15053875, PubMed:17567574, PubMed:18820299). Also acts as a phosphatase; hydrolyzes the non-canonical purine nucleotides inosine diphosphate (IDP) and deoxyinosine diphosphate (dITP) as well as guanosine diphosphate (GDP), deoxyguanosine diphosphate (dGDP), xanthine diphosphate (XDP), inosine triphosphate (ITP) and deoxyinosine triphosphate (ITP) to their respective monophosphate derivatives and does not distinguish between the deoxy- and ribose forms. The order of activity with different substrates is IDP &gt; dIDP &gt;&gt; GDP = dGDP &gt; XDP = ITP = dITP. Binds strongly to GTP, ITP and XTP. Participates in the hydrolysis of dIDP/IDP and probably excludes non-canonical purines from RNA and DNA precursor pools, thus preventing their incorporation into RNA and DNA and avoiding chromosomal lesions (By similarity). Exhibits decapping activity towards NAD-capped RNAs and FAD-capped RNAs (By similarity). Exhibits decapping activity towards dpCoA-capped RNAs in vitro (By similarity).</text>
</comment>
<comment type="catalytic activity">
    <reaction evidence="6 8 9">
        <text>a 5'-end (N(7)-methyl 5'-triphosphoguanosine)-ribonucleoside in mRNA + H2O = N(7)-methyl-GDP + a 5'-end phospho-ribonucleoside in mRNA + 2 H(+)</text>
        <dbReference type="Rhea" id="RHEA:67484"/>
        <dbReference type="Rhea" id="RHEA-COMP:15692"/>
        <dbReference type="Rhea" id="RHEA-COMP:17167"/>
        <dbReference type="ChEBI" id="CHEBI:15377"/>
        <dbReference type="ChEBI" id="CHEBI:15378"/>
        <dbReference type="ChEBI" id="CHEBI:63714"/>
        <dbReference type="ChEBI" id="CHEBI:138282"/>
        <dbReference type="ChEBI" id="CHEBI:156461"/>
        <dbReference type="EC" id="3.6.1.62"/>
    </reaction>
    <physiologicalReaction direction="left-to-right" evidence="6 8 9">
        <dbReference type="Rhea" id="RHEA:67485"/>
    </physiologicalReaction>
</comment>
<comment type="catalytic activity">
    <reaction evidence="2">
        <text>IDP + H2O = IMP + phosphate + H(+)</text>
        <dbReference type="Rhea" id="RHEA:35207"/>
        <dbReference type="ChEBI" id="CHEBI:15377"/>
        <dbReference type="ChEBI" id="CHEBI:15378"/>
        <dbReference type="ChEBI" id="CHEBI:43474"/>
        <dbReference type="ChEBI" id="CHEBI:58053"/>
        <dbReference type="ChEBI" id="CHEBI:58280"/>
        <dbReference type="EC" id="3.6.1.64"/>
    </reaction>
    <physiologicalReaction direction="left-to-right" evidence="2">
        <dbReference type="Rhea" id="RHEA:35208"/>
    </physiologicalReaction>
</comment>
<comment type="catalytic activity">
    <reaction evidence="2">
        <text>dIDP + H2O = dIMP + phosphate + H(+)</text>
        <dbReference type="Rhea" id="RHEA:35211"/>
        <dbReference type="ChEBI" id="CHEBI:15377"/>
        <dbReference type="ChEBI" id="CHEBI:15378"/>
        <dbReference type="ChEBI" id="CHEBI:43474"/>
        <dbReference type="ChEBI" id="CHEBI:61194"/>
        <dbReference type="ChEBI" id="CHEBI:62286"/>
        <dbReference type="EC" id="3.6.1.64"/>
    </reaction>
    <physiologicalReaction direction="left-to-right" evidence="2">
        <dbReference type="Rhea" id="RHEA:35212"/>
    </physiologicalReaction>
</comment>
<comment type="catalytic activity">
    <reaction evidence="2">
        <text>a 5'-end NAD(+)-phospho-ribonucleoside in mRNA + H2O = a 5'-end phospho-ribonucleoside in mRNA + NAD(+) + H(+)</text>
        <dbReference type="Rhea" id="RHEA:60880"/>
        <dbReference type="Rhea" id="RHEA-COMP:15692"/>
        <dbReference type="Rhea" id="RHEA-COMP:15698"/>
        <dbReference type="ChEBI" id="CHEBI:15377"/>
        <dbReference type="ChEBI" id="CHEBI:15378"/>
        <dbReference type="ChEBI" id="CHEBI:57540"/>
        <dbReference type="ChEBI" id="CHEBI:138282"/>
        <dbReference type="ChEBI" id="CHEBI:144029"/>
    </reaction>
    <physiologicalReaction direction="left-to-right" evidence="2">
        <dbReference type="Rhea" id="RHEA:60881"/>
    </physiologicalReaction>
</comment>
<comment type="catalytic activity">
    <reaction evidence="2">
        <text>a 5'-end FAD-phospho-ribonucleoside in mRNA + H2O = a 5'-end phospho-adenosine-phospho-ribonucleoside in mRNA + FMN + 2 H(+)</text>
        <dbReference type="Rhea" id="RHEA:67588"/>
        <dbReference type="Rhea" id="RHEA-COMP:15719"/>
        <dbReference type="Rhea" id="RHEA-COMP:17275"/>
        <dbReference type="ChEBI" id="CHEBI:15377"/>
        <dbReference type="ChEBI" id="CHEBI:15378"/>
        <dbReference type="ChEBI" id="CHEBI:58210"/>
        <dbReference type="ChEBI" id="CHEBI:144051"/>
        <dbReference type="ChEBI" id="CHEBI:172372"/>
    </reaction>
    <physiologicalReaction direction="left-to-right" evidence="2">
        <dbReference type="Rhea" id="RHEA:67589"/>
    </physiologicalReaction>
</comment>
<comment type="catalytic activity">
    <reaction evidence="1">
        <text>a 5'-end CoA-ribonucleoside in mRNA + H2O = a 5'-end phospho-adenosine-phospho-ribonucleoside in mRNA + (R)-4'-phosphopantetheine + 2 H(+)</text>
        <dbReference type="Rhea" id="RHEA:67592"/>
        <dbReference type="Rhea" id="RHEA-COMP:15719"/>
        <dbReference type="Rhea" id="RHEA-COMP:17276"/>
        <dbReference type="ChEBI" id="CHEBI:15377"/>
        <dbReference type="ChEBI" id="CHEBI:15378"/>
        <dbReference type="ChEBI" id="CHEBI:61723"/>
        <dbReference type="ChEBI" id="CHEBI:144051"/>
        <dbReference type="ChEBI" id="CHEBI:172371"/>
    </reaction>
    <physiologicalReaction direction="left-to-right" evidence="1">
        <dbReference type="Rhea" id="RHEA:67593"/>
    </physiologicalReaction>
</comment>
<comment type="cofactor">
    <cofactor evidence="6 8">
        <name>Mg(2+)</name>
        <dbReference type="ChEBI" id="CHEBI:18420"/>
    </cofactor>
    <cofactor evidence="6 8">
        <name>Mn(2+)</name>
        <dbReference type="ChEBI" id="CHEBI:29035"/>
    </cofactor>
    <cofactor evidence="6 8">
        <name>Co(2+)</name>
        <dbReference type="ChEBI" id="CHEBI:48828"/>
    </cofactor>
    <text evidence="6 8">Binds 3 or 4 divalent metal cations. Acts specifically on U8 snoRNA with magnesium as cofactor. Has broad substrate specificity with bound manganese or cobalt (in vitro).</text>
</comment>
<comment type="biophysicochemical properties">
    <phDependence>
        <text evidence="8">Optimum pH is 8.5-9.</text>
    </phDependence>
</comment>
<comment type="subunit">
    <text evidence="7 9">Homodimer.</text>
</comment>
<comment type="subcellular location">
    <subcellularLocation>
        <location evidence="6">Nucleus</location>
    </subcellularLocation>
    <subcellularLocation>
        <location evidence="6">Nucleus</location>
        <location evidence="6">Nucleolus</location>
    </subcellularLocation>
    <subcellularLocation>
        <location evidence="6">Nucleus</location>
        <location evidence="6">Nucleoplasm</location>
    </subcellularLocation>
    <subcellularLocation>
        <location evidence="2">Cytoplasm</location>
    </subcellularLocation>
    <text evidence="6">Predominantly localized in nucleolus, and in a minor proportion in distinct foci in the nucleoplasm.</text>
</comment>
<comment type="tissue specificity">
    <text evidence="6">Detected in ovary, and at very low levels in epithelial cells (at protein level).</text>
</comment>
<comment type="similarity">
    <text evidence="10">Belongs to the Nudix hydrolase family. NUDT16 subfamily.</text>
</comment>
<reference key="1">
    <citation type="journal article" date="2004" name="Mol. Cell">
        <title>Xenopus U8 snoRNA binding protein is a conserved nuclear decapping enzyme.</title>
        <authorList>
            <person name="Ghosh T."/>
            <person name="Peterson B."/>
            <person name="Tomasevic N."/>
            <person name="Peculis B.A."/>
        </authorList>
    </citation>
    <scope>NUCLEOTIDE SEQUENCE [MRNA]</scope>
    <scope>PARTIAL PROTEIN SEQUENCE</scope>
    <scope>FUNCTION</scope>
    <scope>CATALYTIC ACTIVITY</scope>
    <scope>RNA-BINDING</scope>
    <scope>COFACTOR</scope>
    <scope>SUBCELLULAR LOCATION</scope>
    <scope>MUTAGENESIS OF 92-GLU-GLU-93</scope>
    <scope>TISSUE SPECIFICITY</scope>
    <scope>IDENTIFICATION BY MASS SPECTROMETRY</scope>
    <source>
        <tissue>Liver</tissue>
        <tissue>Ovary</tissue>
    </source>
</reference>
<reference key="2">
    <citation type="submission" date="2007-05" db="EMBL/GenBank/DDBJ databases">
        <authorList>
            <consortium name="NIH - Xenopus Gene Collection (XGC) project"/>
        </authorList>
    </citation>
    <scope>NUCLEOTIDE SEQUENCE [LARGE SCALE MRNA]</scope>
    <source>
        <tissue>Brain</tissue>
        <tissue>Eye</tissue>
        <tissue>Fat body</tissue>
        <tissue>Testis</tissue>
    </source>
</reference>
<reference key="3">
    <citation type="journal article" date="1999" name="J. Biol. Chem.">
        <title>Identification of a U8 snoRNA-specific binding protein.</title>
        <authorList>
            <person name="Tomasevic N."/>
            <person name="Peculis B."/>
        </authorList>
    </citation>
    <scope>FUNCTION</scope>
    <scope>RNA-BINDING</scope>
</reference>
<reference key="4">
    <citation type="journal article" date="2007" name="J. Biol. Chem.">
        <title>Metal determines efficiency and substrate specificity of the nuclear NUDIX decapping proteins X29 and H29K (Nudt16).</title>
        <authorList>
            <person name="Peculis B.A."/>
            <person name="Reynolds K."/>
            <person name="Cleland M."/>
        </authorList>
    </citation>
    <scope>FUNCTION AS A DECAPPING ENZYME</scope>
    <scope>BIOPHYSICOCHEMICAL PROPERTIES</scope>
    <scope>CATALYTIC ACTIVITY</scope>
    <scope>COFACTOR SUBUNIT</scope>
    <scope>RNA-BINDING</scope>
    <scope>MUTAGENESIS OF GLU-89 AND GLU-150</scope>
</reference>
<reference key="5">
    <citation type="journal article" date="2008" name="Nucleic Acids Res.">
        <title>Evolutionary conservation supports ancient origin for Nudt16, a nuclear-localized, RNA-binding, RNA-decapping enzyme.</title>
        <authorList>
            <person name="Taylor M.J."/>
            <person name="Peculis B.A."/>
        </authorList>
    </citation>
    <scope>FUNCTION AS A DECAPPING ENZYME</scope>
    <scope>CATALYTIC ACTIVITY</scope>
    <scope>SUBUNIT</scope>
    <scope>RNA-BINDING</scope>
</reference>
<reference key="6">
    <citation type="journal article" date="2006" name="Structure">
        <title>Crystal structures of U8 snoRNA decapping nudix hydrolase, X29, and its metal and cap complexes.</title>
        <authorList>
            <person name="Scarsdale J.N."/>
            <person name="Peculis B.A."/>
            <person name="Wright H.T."/>
        </authorList>
    </citation>
    <scope>X-RAY CRYSTALLOGRAPHY (2.1 ANGSTROMS) IN COMPLEXES WITH MANGANESE; GTP AND M7G-NUCLEOTIDES</scope>
    <scope>SUBUNIT</scope>
</reference>
<sequence length="212" mass="24350">MAESRSPDRGAKEDKPRPRNISREESLQLEGYKHACHALLHAPSQAKLFDRVPIRRVLLMMMRFDGRLGFPGGFVDTRDISLEEGLKRELEEELGPALATVEVTEDDYRSSQVREHPQKCVTHFYIKELKLEEIERIEAEAVNAKDHGLEVMGLIRVPLYTLRDRVGGLPAFLCNNFIGNSKSQLLYALRSLKLLREDQIQEVLKASHRLQY</sequence>
<gene>
    <name type="primary">nudt16</name>
</gene>
<accession>Q6TEC1</accession>
<accession>Q3KQG8</accession>
<accession>Q569R2</accession>
<accession>Q6AX51</accession>
<dbReference type="EC" id="3.6.1.62" evidence="6 8 9"/>
<dbReference type="EC" id="3.6.1.64" evidence="2"/>
<dbReference type="EMBL" id="AY423379">
    <property type="protein sequence ID" value="AAR36909.1"/>
    <property type="molecule type" value="mRNA"/>
</dbReference>
<dbReference type="EMBL" id="BC079757">
    <property type="protein sequence ID" value="AAH79757.1"/>
    <property type="molecule type" value="mRNA"/>
</dbReference>
<dbReference type="EMBL" id="BC092340">
    <property type="protein sequence ID" value="AAH92340.1"/>
    <property type="molecule type" value="mRNA"/>
</dbReference>
<dbReference type="EMBL" id="BC106213">
    <property type="protein sequence ID" value="AAI06214.1"/>
    <property type="molecule type" value="mRNA"/>
</dbReference>
<dbReference type="EMBL" id="BC124911">
    <property type="protein sequence ID" value="AAI24912.1"/>
    <property type="molecule type" value="mRNA"/>
</dbReference>
<dbReference type="EMBL" id="BC141719">
    <property type="protein sequence ID" value="AAI41720.1"/>
    <property type="molecule type" value="mRNA"/>
</dbReference>
<dbReference type="RefSeq" id="NP_001084713.1">
    <property type="nucleotide sequence ID" value="NM_001091244.1"/>
</dbReference>
<dbReference type="PDB" id="1U20">
    <property type="method" value="X-ray"/>
    <property type="resolution" value="2.10 A"/>
    <property type="chains" value="A/B=1-212"/>
</dbReference>
<dbReference type="PDB" id="2A8P">
    <property type="method" value="X-ray"/>
    <property type="resolution" value="2.70 A"/>
    <property type="chains" value="A/B=1-212"/>
</dbReference>
<dbReference type="PDB" id="2A8Q">
    <property type="method" value="X-ray"/>
    <property type="resolution" value="2.60 A"/>
    <property type="chains" value="A/B=1-212"/>
</dbReference>
<dbReference type="PDB" id="2A8R">
    <property type="method" value="X-ray"/>
    <property type="resolution" value="2.45 A"/>
    <property type="chains" value="A/B=1-212"/>
</dbReference>
<dbReference type="PDB" id="2A8S">
    <property type="method" value="X-ray"/>
    <property type="resolution" value="2.45 A"/>
    <property type="chains" value="A/B=1-212"/>
</dbReference>
<dbReference type="PDB" id="2A8T">
    <property type="method" value="X-ray"/>
    <property type="resolution" value="2.10 A"/>
    <property type="chains" value="A/B=1-212"/>
</dbReference>
<dbReference type="PDBsum" id="1U20"/>
<dbReference type="PDBsum" id="2A8P"/>
<dbReference type="PDBsum" id="2A8Q"/>
<dbReference type="PDBsum" id="2A8R"/>
<dbReference type="PDBsum" id="2A8S"/>
<dbReference type="PDBsum" id="2A8T"/>
<dbReference type="SMR" id="Q6TEC1"/>
<dbReference type="DIP" id="DIP-29033N"/>
<dbReference type="DNASU" id="414677"/>
<dbReference type="GeneID" id="414677"/>
<dbReference type="KEGG" id="xla:414677"/>
<dbReference type="AGR" id="Xenbase:XB-GENE-6252278"/>
<dbReference type="CTD" id="414677"/>
<dbReference type="Xenbase" id="XB-GENE-6252278">
    <property type="gene designation" value="nudt16.L"/>
</dbReference>
<dbReference type="OMA" id="VVLMQMR"/>
<dbReference type="OrthoDB" id="5950381at2759"/>
<dbReference type="BRENDA" id="3.6.1.62">
    <property type="organism ID" value="6725"/>
</dbReference>
<dbReference type="CD-CODE" id="78E86D56">
    <property type="entry name" value="Mitochondrial cloud"/>
</dbReference>
<dbReference type="EvolutionaryTrace" id="Q6TEC1"/>
<dbReference type="Proteomes" id="UP000186698">
    <property type="component" value="Chromosome 8L"/>
</dbReference>
<dbReference type="Bgee" id="414677">
    <property type="expression patterns" value="Expressed in internal ear and 19 other cell types or tissues"/>
</dbReference>
<dbReference type="GO" id="GO:0005737">
    <property type="term" value="C:cytoplasm"/>
    <property type="evidence" value="ECO:0000250"/>
    <property type="project" value="UniProtKB"/>
</dbReference>
<dbReference type="GO" id="GO:0005730">
    <property type="term" value="C:nucleolus"/>
    <property type="evidence" value="ECO:0000314"/>
    <property type="project" value="UniProtKB"/>
</dbReference>
<dbReference type="GO" id="GO:0005654">
    <property type="term" value="C:nucleoplasm"/>
    <property type="evidence" value="ECO:0007669"/>
    <property type="project" value="UniProtKB-SubCell"/>
</dbReference>
<dbReference type="GO" id="GO:0005634">
    <property type="term" value="C:nucleus"/>
    <property type="evidence" value="ECO:0000314"/>
    <property type="project" value="UniProtKB"/>
</dbReference>
<dbReference type="GO" id="GO:0140933">
    <property type="term" value="F:5'-(N(7)-methylguanosine 5'-triphospho)-[mRNA] hydrolase activity"/>
    <property type="evidence" value="ECO:0000314"/>
    <property type="project" value="UniProtKB"/>
</dbReference>
<dbReference type="GO" id="GO:0050897">
    <property type="term" value="F:cobalt ion binding"/>
    <property type="evidence" value="ECO:0000314"/>
    <property type="project" value="UniProtKB"/>
</dbReference>
<dbReference type="GO" id="GO:0097383">
    <property type="term" value="F:dIDP phosphatase activity"/>
    <property type="evidence" value="ECO:0000250"/>
    <property type="project" value="UniProtKB"/>
</dbReference>
<dbReference type="GO" id="GO:0035870">
    <property type="term" value="F:dITP diphosphatase activity"/>
    <property type="evidence" value="ECO:0000250"/>
    <property type="project" value="UniProtKB"/>
</dbReference>
<dbReference type="GO" id="GO:1990003">
    <property type="term" value="F:IDP phosphatase activity"/>
    <property type="evidence" value="ECO:0000250"/>
    <property type="project" value="UniProtKB"/>
</dbReference>
<dbReference type="GO" id="GO:0000287">
    <property type="term" value="F:magnesium ion binding"/>
    <property type="evidence" value="ECO:0000314"/>
    <property type="project" value="UniProtKB"/>
</dbReference>
<dbReference type="GO" id="GO:0030145">
    <property type="term" value="F:manganese ion binding"/>
    <property type="evidence" value="ECO:0000314"/>
    <property type="project" value="UniProtKB"/>
</dbReference>
<dbReference type="GO" id="GO:0008235">
    <property type="term" value="F:metalloexopeptidase activity"/>
    <property type="evidence" value="ECO:0000250"/>
    <property type="project" value="UniProtKB"/>
</dbReference>
<dbReference type="GO" id="GO:0003729">
    <property type="term" value="F:mRNA binding"/>
    <property type="evidence" value="ECO:0000250"/>
    <property type="project" value="UniProtKB"/>
</dbReference>
<dbReference type="GO" id="GO:0000166">
    <property type="term" value="F:nucleotide binding"/>
    <property type="evidence" value="ECO:0007669"/>
    <property type="project" value="UniProtKB-KW"/>
</dbReference>
<dbReference type="GO" id="GO:1990174">
    <property type="term" value="F:phosphodiesterase decapping endonuclease activity"/>
    <property type="evidence" value="ECO:0000318"/>
    <property type="project" value="GO_Central"/>
</dbReference>
<dbReference type="GO" id="GO:0042803">
    <property type="term" value="F:protein homodimerization activity"/>
    <property type="evidence" value="ECO:0000314"/>
    <property type="project" value="UniProtKB"/>
</dbReference>
<dbReference type="GO" id="GO:0110152">
    <property type="term" value="F:RNA NAD+-cap (NAD+-forming) hydrolase activity"/>
    <property type="evidence" value="ECO:0007669"/>
    <property type="project" value="RHEA"/>
</dbReference>
<dbReference type="GO" id="GO:0030515">
    <property type="term" value="F:snoRNA binding"/>
    <property type="evidence" value="ECO:0000314"/>
    <property type="project" value="UniProtKB"/>
</dbReference>
<dbReference type="GO" id="GO:0035863">
    <property type="term" value="P:dITP catabolic process"/>
    <property type="evidence" value="ECO:0000250"/>
    <property type="project" value="UniProtKB"/>
</dbReference>
<dbReference type="GO" id="GO:0006402">
    <property type="term" value="P:mRNA catabolic process"/>
    <property type="evidence" value="ECO:0000250"/>
    <property type="project" value="UniProtKB"/>
</dbReference>
<dbReference type="GO" id="GO:0110155">
    <property type="term" value="P:NAD-cap decapping"/>
    <property type="evidence" value="ECO:0000250"/>
    <property type="project" value="UniProtKB"/>
</dbReference>
<dbReference type="GO" id="GO:2000233">
    <property type="term" value="P:negative regulation of rRNA processing"/>
    <property type="evidence" value="ECO:0000314"/>
    <property type="project" value="UniProtKB"/>
</dbReference>
<dbReference type="GO" id="GO:0090068">
    <property type="term" value="P:positive regulation of cell cycle process"/>
    <property type="evidence" value="ECO:0000250"/>
    <property type="project" value="UniProtKB"/>
</dbReference>
<dbReference type="GO" id="GO:0016077">
    <property type="term" value="P:sno(s)RNA catabolic process"/>
    <property type="evidence" value="ECO:0000314"/>
    <property type="project" value="UniProtKB"/>
</dbReference>
<dbReference type="CDD" id="cd18869">
    <property type="entry name" value="NUDIX_U8_SnoRNA_DE_Nudt16"/>
    <property type="match status" value="1"/>
</dbReference>
<dbReference type="FunFam" id="3.90.79.10:FF:000101">
    <property type="entry name" value="U8 snoRNA-decapping enzyme"/>
    <property type="match status" value="1"/>
</dbReference>
<dbReference type="Gene3D" id="3.90.79.10">
    <property type="entry name" value="Nucleoside Triphosphate Pyrophosphohydrolase"/>
    <property type="match status" value="1"/>
</dbReference>
<dbReference type="InterPro" id="IPR015797">
    <property type="entry name" value="NUDIX_hydrolase-like_dom_sf"/>
</dbReference>
<dbReference type="InterPro" id="IPR000086">
    <property type="entry name" value="NUDIX_hydrolase_dom"/>
</dbReference>
<dbReference type="InterPro" id="IPR054754">
    <property type="entry name" value="NudT16"/>
</dbReference>
<dbReference type="PANTHER" id="PTHR31699">
    <property type="entry name" value="NUDIX T16 FAMILY MEMBER"/>
    <property type="match status" value="1"/>
</dbReference>
<dbReference type="PANTHER" id="PTHR31699:SF1">
    <property type="entry name" value="U8 SNORNA-DECAPPING ENZYME"/>
    <property type="match status" value="1"/>
</dbReference>
<dbReference type="Pfam" id="PF22327">
    <property type="entry name" value="Nudt16-like"/>
    <property type="match status" value="1"/>
</dbReference>
<dbReference type="SUPFAM" id="SSF55811">
    <property type="entry name" value="Nudix"/>
    <property type="match status" value="1"/>
</dbReference>
<dbReference type="PROSITE" id="PS51462">
    <property type="entry name" value="NUDIX"/>
    <property type="match status" value="1"/>
</dbReference>
<feature type="chain" id="PRO_0000344987" description="U8 snoRNA-decapping enzyme">
    <location>
        <begin position="1"/>
        <end position="212"/>
    </location>
</feature>
<feature type="domain" description="Nudix hydrolase" evidence="3">
    <location>
        <begin position="39"/>
        <end position="187"/>
    </location>
</feature>
<feature type="region of interest" description="Disordered" evidence="4">
    <location>
        <begin position="1"/>
        <end position="23"/>
    </location>
</feature>
<feature type="short sequence motif" description="Nudix box">
    <location>
        <begin position="74"/>
        <end position="95"/>
    </location>
</feature>
<feature type="binding site" evidence="7">
    <location>
        <position position="37"/>
    </location>
    <ligand>
        <name>substrate</name>
    </ligand>
</feature>
<feature type="binding site" evidence="7">
    <location>
        <position position="63"/>
    </location>
    <ligand>
        <name>substrate</name>
    </ligand>
</feature>
<feature type="binding site" evidence="2">
    <location>
        <position position="70"/>
    </location>
    <ligand>
        <name>substrate</name>
    </ligand>
</feature>
<feature type="binding site" evidence="7">
    <location>
        <position position="72"/>
    </location>
    <ligand>
        <name>Mn(2+)</name>
        <dbReference type="ChEBI" id="CHEBI:29035"/>
        <label>1</label>
    </ligand>
</feature>
<feature type="binding site" evidence="7">
    <location>
        <position position="89"/>
    </location>
    <ligand>
        <name>Mn(2+)</name>
        <dbReference type="ChEBI" id="CHEBI:29035"/>
        <label>2</label>
    </ligand>
</feature>
<feature type="binding site" evidence="7">
    <location>
        <position position="89"/>
    </location>
    <ligand>
        <name>Mn(2+)</name>
        <dbReference type="ChEBI" id="CHEBI:29035"/>
        <label>3</label>
    </ligand>
</feature>
<feature type="binding site" evidence="7">
    <location>
        <position position="93"/>
    </location>
    <ligand>
        <name>Mn(2+)</name>
        <dbReference type="ChEBI" id="CHEBI:29035"/>
        <label>1</label>
    </ligand>
</feature>
<feature type="binding site" evidence="7">
    <location>
        <position position="93"/>
    </location>
    <ligand>
        <name>Mn(2+)</name>
        <dbReference type="ChEBI" id="CHEBI:29035"/>
        <label>3</label>
    </ligand>
</feature>
<feature type="binding site" evidence="7">
    <location>
        <position position="150"/>
    </location>
    <ligand>
        <name>Mn(2+)</name>
        <dbReference type="ChEBI" id="CHEBI:29035"/>
        <label>3</label>
    </ligand>
</feature>
<feature type="binding site" evidence="7">
    <location>
        <position position="150"/>
    </location>
    <ligand>
        <name>Mn(2+)</name>
        <dbReference type="ChEBI" id="CHEBI:29035"/>
        <label>4</label>
    </ligand>
</feature>
<feature type="binding site" evidence="7">
    <location>
        <position position="180"/>
    </location>
    <ligand>
        <name>substrate</name>
    </ligand>
</feature>
<feature type="binding site" evidence="7">
    <location>
        <position position="184"/>
    </location>
    <ligand>
        <name>substrate</name>
    </ligand>
</feature>
<feature type="mutagenesis site" description="Loss of activity; no effect on RNA-binding.">
    <original>R</original>
    <variation>L</variation>
    <location>
        <position position="88"/>
    </location>
</feature>
<feature type="mutagenesis site" description="Loss of activity; no effect on RNA-binding." evidence="8">
    <original>E</original>
    <variation>Q</variation>
    <location>
        <position position="89"/>
    </location>
</feature>
<feature type="mutagenesis site" description="Strongly reduced activity; no effect on RNA-binding." evidence="6">
    <original>EE</original>
    <variation>KK</variation>
    <location>
        <begin position="92"/>
        <end position="93"/>
    </location>
</feature>
<feature type="mutagenesis site" description="Reduced activity; no effect on RNA-binding.">
    <original>E</original>
    <variation>Q</variation>
    <location>
        <position position="92"/>
    </location>
</feature>
<feature type="mutagenesis site" description="Strongly reduced activity; no effect on RNA-binding.">
    <original>E</original>
    <variation>Q</variation>
    <location>
        <position position="93"/>
    </location>
</feature>
<feature type="mutagenesis site" description="Loss of activity; no effect on RNA-binding." evidence="8">
    <original>E</original>
    <variation>Q</variation>
    <location>
        <position position="150"/>
    </location>
</feature>
<feature type="strand" evidence="11">
    <location>
        <begin position="18"/>
        <end position="20"/>
    </location>
</feature>
<feature type="helix" evidence="11">
    <location>
        <begin position="23"/>
        <end position="27"/>
    </location>
</feature>
<feature type="strand" evidence="11">
    <location>
        <begin position="33"/>
        <end position="43"/>
    </location>
</feature>
<feature type="turn" evidence="11">
    <location>
        <begin position="49"/>
        <end position="51"/>
    </location>
</feature>
<feature type="strand" evidence="11">
    <location>
        <begin position="56"/>
        <end position="63"/>
    </location>
</feature>
<feature type="strand" evidence="11">
    <location>
        <begin position="71"/>
        <end position="75"/>
    </location>
</feature>
<feature type="turn" evidence="11">
    <location>
        <begin position="77"/>
        <end position="79"/>
    </location>
</feature>
<feature type="helix" evidence="11">
    <location>
        <begin position="82"/>
        <end position="94"/>
    </location>
</feature>
<feature type="helix" evidence="11">
    <location>
        <begin position="96"/>
        <end position="100"/>
    </location>
</feature>
<feature type="helix" evidence="11">
    <location>
        <begin position="105"/>
        <end position="107"/>
    </location>
</feature>
<feature type="strand" evidence="11">
    <location>
        <begin position="108"/>
        <end position="114"/>
    </location>
</feature>
<feature type="strand" evidence="12">
    <location>
        <begin position="116"/>
        <end position="118"/>
    </location>
</feature>
<feature type="strand" evidence="11">
    <location>
        <begin position="120"/>
        <end position="128"/>
    </location>
</feature>
<feature type="helix" evidence="11">
    <location>
        <begin position="131"/>
        <end position="141"/>
    </location>
</feature>
<feature type="turn" evidence="11">
    <location>
        <begin position="148"/>
        <end position="150"/>
    </location>
</feature>
<feature type="strand" evidence="11">
    <location>
        <begin position="151"/>
        <end position="156"/>
    </location>
</feature>
<feature type="helix" evidence="11">
    <location>
        <begin position="169"/>
        <end position="172"/>
    </location>
</feature>
<feature type="helix" evidence="11">
    <location>
        <begin position="181"/>
        <end position="191"/>
    </location>
</feature>
<feature type="helix" evidence="11">
    <location>
        <begin position="197"/>
        <end position="208"/>
    </location>
</feature>
<name>NUD16_XENLA</name>